<protein>
    <recommendedName>
        <fullName>Uncharacterized membrane protein Rv3760</fullName>
    </recommendedName>
</protein>
<proteinExistence type="evidence at protein level"/>
<sequence length="117" mass="12196">MTSNPSSSADQPLSGTTVPGSVPGKAPEEPPVKFTRAAAVWSALIVGFLILILLLIFIAQNTASAQFAFFGWRWSLPLGVAILLAAVGGGLITVFAGTARILQLRRAAKKTHAAALR</sequence>
<comment type="subcellular location">
    <subcellularLocation>
        <location evidence="3">Cell membrane</location>
        <topology evidence="3">Multi-pass membrane protein</topology>
    </subcellularLocation>
</comment>
<comment type="sequence caution" evidence="3">
    <conflict type="erroneous initiation">
        <sequence resource="EMBL-CDS" id="CCP46587"/>
    </conflict>
    <text>Truncated N-terminus.</text>
</comment>
<organism>
    <name type="scientific">Mycobacterium tuberculosis (strain ATCC 25618 / H37Rv)</name>
    <dbReference type="NCBI Taxonomy" id="83332"/>
    <lineage>
        <taxon>Bacteria</taxon>
        <taxon>Bacillati</taxon>
        <taxon>Actinomycetota</taxon>
        <taxon>Actinomycetes</taxon>
        <taxon>Mycobacteriales</taxon>
        <taxon>Mycobacteriaceae</taxon>
        <taxon>Mycobacterium</taxon>
        <taxon>Mycobacterium tuberculosis complex</taxon>
    </lineage>
</organism>
<reference key="1">
    <citation type="journal article" date="1998" name="Nature">
        <title>Deciphering the biology of Mycobacterium tuberculosis from the complete genome sequence.</title>
        <authorList>
            <person name="Cole S.T."/>
            <person name="Brosch R."/>
            <person name="Parkhill J."/>
            <person name="Garnier T."/>
            <person name="Churcher C.M."/>
            <person name="Harris D.E."/>
            <person name="Gordon S.V."/>
            <person name="Eiglmeier K."/>
            <person name="Gas S."/>
            <person name="Barry C.E. III"/>
            <person name="Tekaia F."/>
            <person name="Badcock K."/>
            <person name="Basham D."/>
            <person name="Brown D."/>
            <person name="Chillingworth T."/>
            <person name="Connor R."/>
            <person name="Davies R.M."/>
            <person name="Devlin K."/>
            <person name="Feltwell T."/>
            <person name="Gentles S."/>
            <person name="Hamlin N."/>
            <person name="Holroyd S."/>
            <person name="Hornsby T."/>
            <person name="Jagels K."/>
            <person name="Krogh A."/>
            <person name="McLean J."/>
            <person name="Moule S."/>
            <person name="Murphy L.D."/>
            <person name="Oliver S."/>
            <person name="Osborne J."/>
            <person name="Quail M.A."/>
            <person name="Rajandream M.A."/>
            <person name="Rogers J."/>
            <person name="Rutter S."/>
            <person name="Seeger K."/>
            <person name="Skelton S."/>
            <person name="Squares S."/>
            <person name="Squares R."/>
            <person name="Sulston J.E."/>
            <person name="Taylor K."/>
            <person name="Whitehead S."/>
            <person name="Barrell B.G."/>
        </authorList>
    </citation>
    <scope>NUCLEOTIDE SEQUENCE [LARGE SCALE GENOMIC DNA]</scope>
    <source>
        <strain>ATCC 25618 / H37Rv</strain>
    </source>
</reference>
<reference key="2">
    <citation type="journal article" date="2011" name="Mol. Cell. Proteomics">
        <title>Proteogenomic analysis of Mycobacterium tuberculosis by high resolution mass spectrometry.</title>
        <authorList>
            <person name="Kelkar D.S."/>
            <person name="Kumar D."/>
            <person name="Kumar P."/>
            <person name="Balakrishnan L."/>
            <person name="Muthusamy B."/>
            <person name="Yadav A.K."/>
            <person name="Shrivastava P."/>
            <person name="Marimuthu A."/>
            <person name="Anand S."/>
            <person name="Sundaram H."/>
            <person name="Kingsbury R."/>
            <person name="Harsha H.C."/>
            <person name="Nair B."/>
            <person name="Prasad T.S."/>
            <person name="Chauhan D.S."/>
            <person name="Katoch K."/>
            <person name="Katoch V.M."/>
            <person name="Kumar P."/>
            <person name="Chaerkady R."/>
            <person name="Ramachandran S."/>
            <person name="Dash D."/>
            <person name="Pandey A."/>
        </authorList>
    </citation>
    <scope>IDENTIFICATION BY MASS SPECTROMETRY [LARGE SCALE ANALYSIS]</scope>
    <source>
        <strain>ATCC 25618 / H37Rv</strain>
    </source>
</reference>
<keyword id="KW-1003">Cell membrane</keyword>
<keyword id="KW-0472">Membrane</keyword>
<keyword id="KW-1185">Reference proteome</keyword>
<keyword id="KW-0812">Transmembrane</keyword>
<keyword id="KW-1133">Transmembrane helix</keyword>
<name>Y3760_MYCTU</name>
<dbReference type="EMBL" id="AL123456">
    <property type="protein sequence ID" value="CCP46587.1"/>
    <property type="status" value="ALT_INIT"/>
    <property type="molecule type" value="Genomic_DNA"/>
</dbReference>
<dbReference type="PIR" id="A70801">
    <property type="entry name" value="A70801"/>
</dbReference>
<dbReference type="RefSeq" id="NP_218277.1">
    <property type="nucleotide sequence ID" value="NC_000962.3"/>
</dbReference>
<dbReference type="RefSeq" id="WP_003420534.1">
    <property type="nucleotide sequence ID" value="NC_000962.3"/>
</dbReference>
<dbReference type="RefSeq" id="WP_003899680.1">
    <property type="nucleotide sequence ID" value="NZ_NVQJ01000009.1"/>
</dbReference>
<dbReference type="STRING" id="83332.Rv3760"/>
<dbReference type="PaxDb" id="83332-Rv3760"/>
<dbReference type="DNASU" id="886093"/>
<dbReference type="GeneID" id="886093"/>
<dbReference type="KEGG" id="mtu:Rv3760"/>
<dbReference type="PATRIC" id="fig|83332.12.peg.4189"/>
<dbReference type="TubercuList" id="Rv3760"/>
<dbReference type="eggNOG" id="COG5416">
    <property type="taxonomic scope" value="Bacteria"/>
</dbReference>
<dbReference type="InParanoid" id="O69726"/>
<dbReference type="Proteomes" id="UP000001584">
    <property type="component" value="Chromosome"/>
</dbReference>
<dbReference type="GO" id="GO:0005886">
    <property type="term" value="C:plasma membrane"/>
    <property type="evidence" value="ECO:0007669"/>
    <property type="project" value="UniProtKB-SubCell"/>
</dbReference>
<dbReference type="InterPro" id="IPR010445">
    <property type="entry name" value="LapA_dom"/>
</dbReference>
<dbReference type="Pfam" id="PF06305">
    <property type="entry name" value="LapA_dom"/>
    <property type="match status" value="1"/>
</dbReference>
<accession>O69726</accession>
<accession>L0TF60</accession>
<feature type="chain" id="PRO_0000415510" description="Uncharacterized membrane protein Rv3760">
    <location>
        <begin position="1"/>
        <end position="117"/>
    </location>
</feature>
<feature type="transmembrane region" description="Helical" evidence="1">
    <location>
        <begin position="38"/>
        <end position="58"/>
    </location>
</feature>
<feature type="transmembrane region" description="Helical" evidence="1">
    <location>
        <begin position="76"/>
        <end position="96"/>
    </location>
</feature>
<feature type="region of interest" description="Disordered" evidence="2">
    <location>
        <begin position="1"/>
        <end position="28"/>
    </location>
</feature>
<feature type="compositionally biased region" description="Polar residues" evidence="2">
    <location>
        <begin position="1"/>
        <end position="19"/>
    </location>
</feature>
<gene>
    <name type="ordered locus">Rv3760</name>
</gene>
<evidence type="ECO:0000255" key="1"/>
<evidence type="ECO:0000256" key="2">
    <source>
        <dbReference type="SAM" id="MobiDB-lite"/>
    </source>
</evidence>
<evidence type="ECO:0000305" key="3"/>